<reference key="1">
    <citation type="journal article" date="1989" name="Mol. Gen. Genet.">
        <title>Strong homology between the small subunit of ribulose-1,5-bisphosphate carboxylase/oxygenase of two species of Acetabularia and the occurrence of unusual codon usage.</title>
        <authorList>
            <person name="Schneider S.U."/>
            <person name="Leible M.B."/>
            <person name="Yang X.P."/>
        </authorList>
    </citation>
    <scope>NUCLEOTIDE SEQUENCE [MRNA]</scope>
    <source>
        <strain>17</strain>
    </source>
</reference>
<evidence type="ECO:0000250" key="1"/>
<evidence type="ECO:0000255" key="2">
    <source>
        <dbReference type="HAMAP-Rule" id="MF_00860"/>
    </source>
</evidence>
<dbReference type="EMBL" id="X51808">
    <property type="protein sequence ID" value="CAA36105.1"/>
    <property type="molecule type" value="mRNA"/>
</dbReference>
<dbReference type="PIR" id="S05352">
    <property type="entry name" value="RKJK3C"/>
</dbReference>
<dbReference type="SMR" id="P16131"/>
<dbReference type="GO" id="GO:0009507">
    <property type="term" value="C:chloroplast"/>
    <property type="evidence" value="ECO:0007669"/>
    <property type="project" value="UniProtKB-SubCell"/>
</dbReference>
<dbReference type="GO" id="GO:0004497">
    <property type="term" value="F:monooxygenase activity"/>
    <property type="evidence" value="ECO:0007669"/>
    <property type="project" value="UniProtKB-KW"/>
</dbReference>
<dbReference type="GO" id="GO:0016984">
    <property type="term" value="F:ribulose-bisphosphate carboxylase activity"/>
    <property type="evidence" value="ECO:0007669"/>
    <property type="project" value="UniProtKB-UniRule"/>
</dbReference>
<dbReference type="GO" id="GO:0009853">
    <property type="term" value="P:photorespiration"/>
    <property type="evidence" value="ECO:0007669"/>
    <property type="project" value="UniProtKB-KW"/>
</dbReference>
<dbReference type="GO" id="GO:0019253">
    <property type="term" value="P:reductive pentose-phosphate cycle"/>
    <property type="evidence" value="ECO:0007669"/>
    <property type="project" value="UniProtKB-UniRule"/>
</dbReference>
<dbReference type="CDD" id="cd03527">
    <property type="entry name" value="RuBisCO_small"/>
    <property type="match status" value="1"/>
</dbReference>
<dbReference type="FunFam" id="3.30.190.10:FF:000001">
    <property type="entry name" value="Ribulose bisphosphate carboxylase small chain, chloroplastic"/>
    <property type="match status" value="1"/>
</dbReference>
<dbReference type="Gene3D" id="3.30.190.10">
    <property type="entry name" value="Ribulose bisphosphate carboxylase, small subunit"/>
    <property type="match status" value="1"/>
</dbReference>
<dbReference type="HAMAP" id="MF_00859">
    <property type="entry name" value="RuBisCO_S_bact"/>
    <property type="match status" value="1"/>
</dbReference>
<dbReference type="InterPro" id="IPR024681">
    <property type="entry name" value="RuBisCO_ssu"/>
</dbReference>
<dbReference type="InterPro" id="IPR000894">
    <property type="entry name" value="RuBisCO_ssu_dom"/>
</dbReference>
<dbReference type="InterPro" id="IPR036385">
    <property type="entry name" value="RuBisCO_ssu_sf"/>
</dbReference>
<dbReference type="PANTHER" id="PTHR31262">
    <property type="entry name" value="RIBULOSE BISPHOSPHATE CARBOXYLASE SMALL CHAIN 1, CHLOROPLASTIC"/>
    <property type="match status" value="1"/>
</dbReference>
<dbReference type="PANTHER" id="PTHR31262:SF0">
    <property type="entry name" value="RIBULOSE BISPHOSPHATE CARBOXYLASE SMALL SUBUNIT, CHLOROPLASTIC 1"/>
    <property type="match status" value="1"/>
</dbReference>
<dbReference type="Pfam" id="PF00101">
    <property type="entry name" value="RuBisCO_small"/>
    <property type="match status" value="1"/>
</dbReference>
<dbReference type="PRINTS" id="PR00152">
    <property type="entry name" value="RUBISCOSMALL"/>
</dbReference>
<dbReference type="SMART" id="SM00961">
    <property type="entry name" value="RuBisCO_small"/>
    <property type="match status" value="1"/>
</dbReference>
<dbReference type="SUPFAM" id="SSF55239">
    <property type="entry name" value="RuBisCO, small subunit"/>
    <property type="match status" value="1"/>
</dbReference>
<proteinExistence type="evidence at transcript level"/>
<name>RBS3_ACEPE</name>
<keyword id="KW-0113">Calvin cycle</keyword>
<keyword id="KW-0120">Carbon dioxide fixation</keyword>
<keyword id="KW-0150">Chloroplast</keyword>
<keyword id="KW-0456">Lyase</keyword>
<keyword id="KW-0503">Monooxygenase</keyword>
<keyword id="KW-0560">Oxidoreductase</keyword>
<keyword id="KW-0601">Photorespiration</keyword>
<keyword id="KW-0602">Photosynthesis</keyword>
<keyword id="KW-0934">Plastid</keyword>
<keyword id="KW-0809">Transit peptide</keyword>
<gene>
    <name evidence="2" type="primary">RBCS3</name>
    <name type="synonym">RBCS-3</name>
</gene>
<accession>P16131</accession>
<sequence>MATTMLNRSVIVNKEVAKTPNFPRATKNNKGFASNAAVQKCRDMMVWQPFNNKMFETFSYLPPLTDEQISKQVDYILANSWTPCLEFAASDQAYAGNENCIRMGPVSSTYQDNRYWTMWKLPMFGCTDGSQVLSEIQACTKAFPDAYIRLVCFDANRQVQISGFLVHRPPSATDYRLPADRQV</sequence>
<organism>
    <name type="scientific">Acetabularia peniculus</name>
    <name type="common">Green alga</name>
    <name type="synonym">Polyphysa peniculus</name>
    <dbReference type="NCBI Taxonomy" id="35862"/>
    <lineage>
        <taxon>Eukaryota</taxon>
        <taxon>Viridiplantae</taxon>
        <taxon>Chlorophyta</taxon>
        <taxon>Ulvophyceae</taxon>
        <taxon>TCBD clade</taxon>
        <taxon>Dasycladales</taxon>
        <taxon>Polyphysaceae</taxon>
        <taxon>Acetabularia</taxon>
    </lineage>
</organism>
<feature type="transit peptide" description="Chloroplast" evidence="1">
    <location>
        <begin position="1"/>
        <end position="43"/>
    </location>
</feature>
<feature type="chain" id="PRO_0000031449" description="Ribulose bisphosphate carboxylase small subunit, chloroplastic 3">
    <location>
        <begin position="44"/>
        <end position="183"/>
    </location>
</feature>
<protein>
    <recommendedName>
        <fullName evidence="2">Ribulose bisphosphate carboxylase small subunit, chloroplastic 3</fullName>
        <shortName evidence="2">RuBisCO small subunit 3</shortName>
    </recommendedName>
</protein>
<comment type="function">
    <text evidence="2">RuBisCO catalyzes two reactions: the carboxylation of D-ribulose 1,5-bisphosphate, the primary event in carbon dioxide fixation, as well as the oxidative fragmentation of the pentose substrate. Both reactions occur simultaneously and in competition at the same active site. Although the small subunit is not catalytic it is essential for maximal activity.</text>
</comment>
<comment type="subunit">
    <text evidence="2">Heterohexadecamer of 8 large and 8 small subunits.</text>
</comment>
<comment type="subcellular location">
    <subcellularLocation>
        <location evidence="2">Plastid</location>
        <location evidence="2">Chloroplast</location>
    </subcellularLocation>
</comment>
<comment type="miscellaneous">
    <text evidence="2">The basic functional RuBisCO is composed of a large chain homodimer in a 'head-to-tail' conformation. In form I RuBisCO this homodimer is arranged in a barrel-like tetramer with the small subunits forming a tetrameric 'cap' on each end of the 'barrel'.</text>
</comment>
<comment type="similarity">
    <text evidence="2">Belongs to the RuBisCO small chain family.</text>
</comment>